<comment type="function">
    <text evidence="2 4 5 6 7 8">Positively regulates the activity of the minus-end directed microtubule motor protein dynein. May enhance dynein-mediated microtubule sliding by targeting dynein to the microtubule plus end. Required for several dynein- and microtubule-dependent processes such as nuclear migration during cell division (PubMed:11685578, PubMed:15331665). Part of a complex with nud-2, which is recruited to the nuclear envelope by unc-83, where, in turn, it recruits dynein to the nuclear surface and regulates nuclear migration in hypodermal precursor cells (PubMed:20005871). Plays a role in GABAergic synaptic vesicle localization in the ventral nerve cord (PubMed:16996038). Required for neuronal cell differentiation (PubMed:15254012).</text>
</comment>
<comment type="subunit">
    <text evidence="7 11">Component of a dynein-regulating complex composed of at least lis-1 and nud-2 (PubMed:20005871). Interacts with nud-2; the interaction is direct (PubMed:16996038).</text>
</comment>
<comment type="subcellular location">
    <subcellularLocation>
        <location evidence="2">Cytoplasm</location>
        <location evidence="2">Cytoskeleton</location>
    </subcellularLocation>
    <subcellularLocation>
        <location evidence="2">Cytoplasm</location>
        <location evidence="2">Cytoskeleton</location>
        <location evidence="2">Microtubule organizing center</location>
        <location evidence="2">Centrosome</location>
    </subcellularLocation>
    <subcellularLocation>
        <location evidence="10">Chromosome</location>
        <location evidence="10">Centromere</location>
        <location evidence="10">Kinetochore</location>
    </subcellularLocation>
    <subcellularLocation>
        <location evidence="11">Nucleus envelope</location>
    </subcellularLocation>
    <text evidence="1 6 11">Localizes to the plus end of microtubules (By similarity). Concentrates in the vicinity of microtubule asters, kinetochores, the cell cortex and the perinuclear region (PubMed:15331665). Probably recruited to the nuclear envelope by unc-83 (PubMed:20005871).</text>
</comment>
<comment type="tissue specificity">
    <text evidence="4 7">Expressed in all classes of neurons in the ventral cord (PubMed:11685578, PubMed:16996038). Expressed in the multinucleate spermathecal valves and adult seam cells (PubMed:11685578).</text>
</comment>
<comment type="domain">
    <text evidence="2">Dimerization mediated by the LisH domain may be required to activate dynein.</text>
</comment>
<comment type="disruption phenotype">
    <text evidence="4 5 7 8 9">Defects lead to convulsions mimicking epilepsy, possibly due to altered neurotransmitter function (PubMed:15254012). RNAi-mediated knockdown results in arrest at the 50-100 cell stage, whereby egg and sperm pronuclei fails to migrate (PubMed:11685578). RNAi-mediated knockdown prevents the sperm-donated centrosome from leaving the posterior cortex in 1-cell embryos (PubMed:20599902). RNAi-mediated knockdown results in an abnormal distribution of GABAergic synaptic vesicles at synaptic termini of the ventral nerve cord (PubMed:16996038). RNAi-mediated knockdown results in nuclear migration defects in hyp7 hypodermal precursor cells, but only in a small number of animals (PubMed:20005871). RNAi-mediated knockdown in a pam-1 mutant background restores anterior-posterior polarity (PubMed:20599902).</text>
</comment>
<comment type="similarity">
    <text evidence="2">Belongs to the WD repeat LIS1/nudF family.</text>
</comment>
<reference key="1">
    <citation type="journal article" date="2001" name="Dev. Genes Evol.">
        <title>Evolutionarily conserved nuclear migration genes required for early embryonic development in Caenorhabditis elegans.</title>
        <authorList>
            <person name="Dawe A.L."/>
            <person name="Caldwell K.A."/>
            <person name="Harris P.M."/>
            <person name="Morris N.R."/>
            <person name="Caldwell G.A."/>
        </authorList>
    </citation>
    <scope>NUCLEOTIDE SEQUENCE [MRNA]</scope>
    <scope>FUNCTION</scope>
    <scope>TISSUE SPECIFICITY</scope>
    <scope>DISRUPTION PHENOTYPE</scope>
    <source>
        <strain>Bristol N2</strain>
    </source>
</reference>
<reference key="2">
    <citation type="journal article" date="1998" name="Science">
        <title>Genome sequence of the nematode C. elegans: a platform for investigating biology.</title>
        <authorList>
            <consortium name="The C. elegans sequencing consortium"/>
        </authorList>
    </citation>
    <scope>NUCLEOTIDE SEQUENCE [LARGE SCALE GENOMIC DNA]</scope>
    <source>
        <strain>Bristol N2</strain>
    </source>
</reference>
<reference key="3">
    <citation type="journal article" date="2004" name="Hum. Mol. Genet.">
        <title>Epileptic-like convulsions associated with LIS-1 in the cytoskeletal control of neurotransmitter signaling in Caenorhabditis elegans.</title>
        <authorList>
            <person name="Williams S.N."/>
            <person name="Locke C.J."/>
            <person name="Braden A.L."/>
            <person name="Caldwell K.A."/>
            <person name="Caldwell G.A."/>
        </authorList>
    </citation>
    <scope>FUNCTION</scope>
    <scope>DISRUPTION PHENOTYPE</scope>
</reference>
<reference key="4">
    <citation type="journal article" date="2004" name="J. Cell Sci.">
        <title>lis-1 is required for dynein-dependent cell division processes in C. elegans embryos.</title>
        <authorList>
            <person name="Cockell M.M."/>
            <person name="Baumer K."/>
            <person name="Goenczy P."/>
        </authorList>
    </citation>
    <scope>FUNCTION</scope>
    <scope>SUBCELLULAR LOCATION</scope>
</reference>
<reference key="5">
    <citation type="journal article" date="2006" name="Brain Res.">
        <title>Genetic interactions among cortical malformation genes that influence susceptibility to convulsions in C. elegans.</title>
        <authorList>
            <person name="Locke C.J."/>
            <person name="Williams S.N."/>
            <person name="Schwarz E.M."/>
            <person name="Caldwell G.A."/>
            <person name="Caldwell K.A."/>
        </authorList>
    </citation>
    <scope>FUNCTION</scope>
    <scope>INTERACTION WITH NUD-2</scope>
    <scope>TISSUE SPECIFICITY</scope>
    <scope>DISRUPTION PHENOTYPE</scope>
</reference>
<reference key="6">
    <citation type="journal article" date="2010" name="Dev. Biol.">
        <title>UNC-83 coordinates kinesin-1 and dynein activities at the nuclear envelope during nuclear migration.</title>
        <authorList>
            <person name="Fridolfsson H.N."/>
            <person name="Ly N."/>
            <person name="Meyerzon M."/>
            <person name="Starr D.A."/>
        </authorList>
    </citation>
    <scope>FUNCTION</scope>
    <scope>IDENTIFICATION IN A COMPLEX WITH NUD-2</scope>
    <scope>SUBCELLULAR LOCATION</scope>
    <scope>DISRUPTION PHENOTYPE</scope>
</reference>
<reference key="7">
    <citation type="journal article" date="2010" name="Dev. Biol.">
        <title>The PAM-1 aminopeptidase regulates centrosome positioning to ensure anterior-posterior axis specification in one-cell C. elegans embryos.</title>
        <authorList>
            <person name="Fortin S.M."/>
            <person name="Marshall S.L."/>
            <person name="Jaeger E.C."/>
            <person name="Greene P.E."/>
            <person name="Brady L.K."/>
            <person name="Isaac R.E."/>
            <person name="Schrandt J.C."/>
            <person name="Brooks D.R."/>
            <person name="Lyczak R."/>
        </authorList>
    </citation>
    <scope>DISRUPTION PHENOTYPE</scope>
</reference>
<gene>
    <name evidence="2" type="primary">lis-1</name>
    <name evidence="12" type="synonym">pnm-1</name>
    <name evidence="12" type="ORF">T03F6.5</name>
</gene>
<dbReference type="EMBL" id="AF164430">
    <property type="protein sequence ID" value="AAF82632.1"/>
    <property type="molecule type" value="mRNA"/>
</dbReference>
<dbReference type="EMBL" id="Z81113">
    <property type="protein sequence ID" value="CAB03282.3"/>
    <property type="molecule type" value="Genomic_DNA"/>
</dbReference>
<dbReference type="PIR" id="T24399">
    <property type="entry name" value="T24399"/>
</dbReference>
<dbReference type="RefSeq" id="NP_499755.1">
    <property type="nucleotide sequence ID" value="NM_067354.8"/>
</dbReference>
<dbReference type="SMR" id="Q9NDC9"/>
<dbReference type="BioGRID" id="41927">
    <property type="interactions" value="39"/>
</dbReference>
<dbReference type="ComplexPortal" id="CPX-1389">
    <property type="entry name" value="lis-1-nud-2 microtubule-associated dynein motor complex"/>
</dbReference>
<dbReference type="FunCoup" id="Q9NDC9">
    <property type="interactions" value="3129"/>
</dbReference>
<dbReference type="IntAct" id="Q9NDC9">
    <property type="interactions" value="2"/>
</dbReference>
<dbReference type="STRING" id="6239.T03F6.5.1"/>
<dbReference type="PaxDb" id="6239-T03F6.5"/>
<dbReference type="PeptideAtlas" id="Q9NDC9"/>
<dbReference type="EnsemblMetazoa" id="T03F6.5.1">
    <property type="protein sequence ID" value="T03F6.5.1"/>
    <property type="gene ID" value="WBGene00003047"/>
</dbReference>
<dbReference type="GeneID" id="176758"/>
<dbReference type="KEGG" id="cel:CELE_T03F6.5"/>
<dbReference type="UCSC" id="T03F6.5">
    <property type="organism name" value="c. elegans"/>
</dbReference>
<dbReference type="AGR" id="WB:WBGene00003047"/>
<dbReference type="CTD" id="36791"/>
<dbReference type="WormBase" id="T03F6.5">
    <property type="protein sequence ID" value="CE29339"/>
    <property type="gene ID" value="WBGene00003047"/>
    <property type="gene designation" value="lis-1"/>
</dbReference>
<dbReference type="eggNOG" id="KOG0295">
    <property type="taxonomic scope" value="Eukaryota"/>
</dbReference>
<dbReference type="GeneTree" id="ENSGT00940000155039"/>
<dbReference type="HOGENOM" id="CLU_000288_57_15_1"/>
<dbReference type="InParanoid" id="Q9NDC9"/>
<dbReference type="OMA" id="WHVATKE"/>
<dbReference type="OrthoDB" id="674604at2759"/>
<dbReference type="PhylomeDB" id="Q9NDC9"/>
<dbReference type="Reactome" id="R-CEL-6811436">
    <property type="pathway name" value="COPI-independent Golgi-to-ER retrograde traffic"/>
</dbReference>
<dbReference type="SignaLink" id="Q9NDC9"/>
<dbReference type="CD-CODE" id="1E117272">
    <property type="entry name" value="Centrosome"/>
</dbReference>
<dbReference type="PRO" id="PR:Q9NDC9"/>
<dbReference type="Proteomes" id="UP000001940">
    <property type="component" value="Chromosome III"/>
</dbReference>
<dbReference type="Bgee" id="WBGene00003047">
    <property type="expression patterns" value="Expressed in adult organism and 4 other cell types or tissues"/>
</dbReference>
<dbReference type="GO" id="GO:0005818">
    <property type="term" value="C:aster"/>
    <property type="evidence" value="ECO:0000314"/>
    <property type="project" value="WormBase"/>
</dbReference>
<dbReference type="GO" id="GO:1904115">
    <property type="term" value="C:axon cytoplasm"/>
    <property type="evidence" value="ECO:0007669"/>
    <property type="project" value="GOC"/>
</dbReference>
<dbReference type="GO" id="GO:0005938">
    <property type="term" value="C:cell cortex"/>
    <property type="evidence" value="ECO:0000314"/>
    <property type="project" value="WormBase"/>
</dbReference>
<dbReference type="GO" id="GO:0005813">
    <property type="term" value="C:centrosome"/>
    <property type="evidence" value="ECO:0007669"/>
    <property type="project" value="UniProtKB-SubCell"/>
</dbReference>
<dbReference type="GO" id="GO:0005737">
    <property type="term" value="C:cytoplasm"/>
    <property type="evidence" value="ECO:0000314"/>
    <property type="project" value="WormBase"/>
</dbReference>
<dbReference type="GO" id="GO:0005868">
    <property type="term" value="C:cytoplasmic dynein complex"/>
    <property type="evidence" value="ECO:0000314"/>
    <property type="project" value="WormBase"/>
</dbReference>
<dbReference type="GO" id="GO:0005881">
    <property type="term" value="C:cytoplasmic microtubule"/>
    <property type="evidence" value="ECO:0000318"/>
    <property type="project" value="GO_Central"/>
</dbReference>
<dbReference type="GO" id="GO:0000776">
    <property type="term" value="C:kinetochore"/>
    <property type="evidence" value="ECO:0000314"/>
    <property type="project" value="WormBase"/>
</dbReference>
<dbReference type="GO" id="GO:0005874">
    <property type="term" value="C:microtubule"/>
    <property type="evidence" value="ECO:0000314"/>
    <property type="project" value="WormBase"/>
</dbReference>
<dbReference type="GO" id="GO:0005875">
    <property type="term" value="C:microtubule associated complex"/>
    <property type="evidence" value="ECO:0000318"/>
    <property type="project" value="GO_Central"/>
</dbReference>
<dbReference type="GO" id="GO:0043005">
    <property type="term" value="C:neuron projection"/>
    <property type="evidence" value="ECO:0000318"/>
    <property type="project" value="GO_Central"/>
</dbReference>
<dbReference type="GO" id="GO:0043025">
    <property type="term" value="C:neuronal cell body"/>
    <property type="evidence" value="ECO:0000318"/>
    <property type="project" value="GO_Central"/>
</dbReference>
<dbReference type="GO" id="GO:0005635">
    <property type="term" value="C:nuclear envelope"/>
    <property type="evidence" value="ECO:0000318"/>
    <property type="project" value="GO_Central"/>
</dbReference>
<dbReference type="GO" id="GO:0048471">
    <property type="term" value="C:perinuclear region of cytoplasm"/>
    <property type="evidence" value="ECO:0000314"/>
    <property type="project" value="WormBase"/>
</dbReference>
<dbReference type="GO" id="GO:0045202">
    <property type="term" value="C:synapse"/>
    <property type="evidence" value="ECO:0007669"/>
    <property type="project" value="GOC"/>
</dbReference>
<dbReference type="GO" id="GO:0070840">
    <property type="term" value="F:dynein complex binding"/>
    <property type="evidence" value="ECO:0000318"/>
    <property type="project" value="GO_Central"/>
</dbReference>
<dbReference type="GO" id="GO:0051010">
    <property type="term" value="F:microtubule plus-end binding"/>
    <property type="evidence" value="ECO:0000318"/>
    <property type="project" value="GO_Central"/>
</dbReference>
<dbReference type="GO" id="GO:0048854">
    <property type="term" value="P:brain morphogenesis"/>
    <property type="evidence" value="ECO:0000318"/>
    <property type="project" value="GO_Central"/>
</dbReference>
<dbReference type="GO" id="GO:0051301">
    <property type="term" value="P:cell division"/>
    <property type="evidence" value="ECO:0007669"/>
    <property type="project" value="UniProtKB-KW"/>
</dbReference>
<dbReference type="GO" id="GO:0051026">
    <property type="term" value="P:chiasma assembly"/>
    <property type="evidence" value="ECO:0000315"/>
    <property type="project" value="WormBase"/>
</dbReference>
<dbReference type="GO" id="GO:0009792">
    <property type="term" value="P:embryo development ending in birth or egg hatching"/>
    <property type="evidence" value="ECO:0000315"/>
    <property type="project" value="WormBase"/>
</dbReference>
<dbReference type="GO" id="GO:0043652">
    <property type="term" value="P:engulfment of apoptotic cell"/>
    <property type="evidence" value="ECO:0000315"/>
    <property type="project" value="WormBase"/>
</dbReference>
<dbReference type="GO" id="GO:0000132">
    <property type="term" value="P:establishment of mitotic spindle orientation"/>
    <property type="evidence" value="ECO:0000315"/>
    <property type="project" value="WormBase"/>
</dbReference>
<dbReference type="GO" id="GO:0007281">
    <property type="term" value="P:germ cell development"/>
    <property type="evidence" value="ECO:0000318"/>
    <property type="project" value="GO_Central"/>
</dbReference>
<dbReference type="GO" id="GO:0040011">
    <property type="term" value="P:locomotion"/>
    <property type="evidence" value="ECO:0000315"/>
    <property type="project" value="WormBase"/>
</dbReference>
<dbReference type="GO" id="GO:0051661">
    <property type="term" value="P:maintenance of centrosome location"/>
    <property type="evidence" value="ECO:0000315"/>
    <property type="project" value="UniProtKB"/>
</dbReference>
<dbReference type="GO" id="GO:0031023">
    <property type="term" value="P:microtubule organizing center organization"/>
    <property type="evidence" value="ECO:0000318"/>
    <property type="project" value="GO_Central"/>
</dbReference>
<dbReference type="GO" id="GO:0051012">
    <property type="term" value="P:microtubule sliding"/>
    <property type="evidence" value="ECO:0007669"/>
    <property type="project" value="UniProtKB-UniRule"/>
</dbReference>
<dbReference type="GO" id="GO:0007018">
    <property type="term" value="P:microtubule-based movement"/>
    <property type="evidence" value="ECO:0000315"/>
    <property type="project" value="WormBase"/>
</dbReference>
<dbReference type="GO" id="GO:0007100">
    <property type="term" value="P:mitotic centrosome separation"/>
    <property type="evidence" value="ECO:0000315"/>
    <property type="project" value="WormBase"/>
</dbReference>
<dbReference type="GO" id="GO:0007097">
    <property type="term" value="P:nuclear migration"/>
    <property type="evidence" value="ECO:0000318"/>
    <property type="project" value="GO_Central"/>
</dbReference>
<dbReference type="GO" id="GO:0031022">
    <property type="term" value="P:nuclear migration along microfilament"/>
    <property type="evidence" value="ECO:0000315"/>
    <property type="project" value="ComplexPortal"/>
</dbReference>
<dbReference type="GO" id="GO:0048477">
    <property type="term" value="P:oogenesis"/>
    <property type="evidence" value="ECO:0007669"/>
    <property type="project" value="UniProtKB-KW"/>
</dbReference>
<dbReference type="GO" id="GO:0035046">
    <property type="term" value="P:pronuclear migration"/>
    <property type="evidence" value="ECO:0000315"/>
    <property type="project" value="WormBase"/>
</dbReference>
<dbReference type="GO" id="GO:0008090">
    <property type="term" value="P:retrograde axonal transport"/>
    <property type="evidence" value="ECO:0000318"/>
    <property type="project" value="GO_Central"/>
</dbReference>
<dbReference type="GO" id="GO:0051225">
    <property type="term" value="P:spindle assembly"/>
    <property type="evidence" value="ECO:0000315"/>
    <property type="project" value="WormBase"/>
</dbReference>
<dbReference type="GO" id="GO:0051932">
    <property type="term" value="P:synaptic transmission, GABAergic"/>
    <property type="evidence" value="ECO:0000315"/>
    <property type="project" value="WormBase"/>
</dbReference>
<dbReference type="GO" id="GO:0048489">
    <property type="term" value="P:synaptic vesicle transport"/>
    <property type="evidence" value="ECO:0000315"/>
    <property type="project" value="WormBase"/>
</dbReference>
<dbReference type="GO" id="GO:0047496">
    <property type="term" value="P:vesicle transport along microtubule"/>
    <property type="evidence" value="ECO:0000318"/>
    <property type="project" value="GO_Central"/>
</dbReference>
<dbReference type="CDD" id="cd00200">
    <property type="entry name" value="WD40"/>
    <property type="match status" value="1"/>
</dbReference>
<dbReference type="FunFam" id="2.130.10.10:FF:000342">
    <property type="entry name" value="Nuclear distribution protein PAC1"/>
    <property type="match status" value="1"/>
</dbReference>
<dbReference type="FunFam" id="1.20.960.30:FF:000002">
    <property type="entry name" value="Platelet-activating factor acetylhydrolase ib"/>
    <property type="match status" value="1"/>
</dbReference>
<dbReference type="Gene3D" id="1.20.960.30">
    <property type="match status" value="1"/>
</dbReference>
<dbReference type="Gene3D" id="2.130.10.10">
    <property type="entry name" value="YVTN repeat-like/Quinoprotein amine dehydrogenase"/>
    <property type="match status" value="1"/>
</dbReference>
<dbReference type="HAMAP" id="MF_03141">
    <property type="entry name" value="lis1"/>
    <property type="match status" value="1"/>
</dbReference>
<dbReference type="InterPro" id="IPR017252">
    <property type="entry name" value="Dynein_regulator_LIS1"/>
</dbReference>
<dbReference type="InterPro" id="IPR020472">
    <property type="entry name" value="G-protein_beta_WD-40_rep"/>
</dbReference>
<dbReference type="InterPro" id="IPR037190">
    <property type="entry name" value="LIS1_N"/>
</dbReference>
<dbReference type="InterPro" id="IPR006594">
    <property type="entry name" value="LisH"/>
</dbReference>
<dbReference type="InterPro" id="IPR056795">
    <property type="entry name" value="PAC1-like_LisH-like_dom"/>
</dbReference>
<dbReference type="InterPro" id="IPR015943">
    <property type="entry name" value="WD40/YVTN_repeat-like_dom_sf"/>
</dbReference>
<dbReference type="InterPro" id="IPR019775">
    <property type="entry name" value="WD40_repeat_CS"/>
</dbReference>
<dbReference type="InterPro" id="IPR036322">
    <property type="entry name" value="WD40_repeat_dom_sf"/>
</dbReference>
<dbReference type="InterPro" id="IPR001680">
    <property type="entry name" value="WD40_rpt"/>
</dbReference>
<dbReference type="PANTHER" id="PTHR19849">
    <property type="entry name" value="PHOSPHOLIPASE A-2-ACTIVATING PROTEIN"/>
    <property type="match status" value="1"/>
</dbReference>
<dbReference type="PANTHER" id="PTHR19849:SF0">
    <property type="entry name" value="PHOSPHOLIPASE A-2-ACTIVATING PROTEIN"/>
    <property type="match status" value="1"/>
</dbReference>
<dbReference type="Pfam" id="PF24951">
    <property type="entry name" value="LisH_PAC1"/>
    <property type="match status" value="1"/>
</dbReference>
<dbReference type="Pfam" id="PF00400">
    <property type="entry name" value="WD40"/>
    <property type="match status" value="7"/>
</dbReference>
<dbReference type="PIRSF" id="PIRSF037647">
    <property type="entry name" value="Dynein_regulator_Lis1"/>
    <property type="match status" value="1"/>
</dbReference>
<dbReference type="PRINTS" id="PR00320">
    <property type="entry name" value="GPROTEINBRPT"/>
</dbReference>
<dbReference type="SMART" id="SM00667">
    <property type="entry name" value="LisH"/>
    <property type="match status" value="1"/>
</dbReference>
<dbReference type="SMART" id="SM00320">
    <property type="entry name" value="WD40"/>
    <property type="match status" value="7"/>
</dbReference>
<dbReference type="SUPFAM" id="SSF109925">
    <property type="entry name" value="Lissencephaly-1 protein (Lis-1, PAF-AH alpha) N-terminal domain"/>
    <property type="match status" value="1"/>
</dbReference>
<dbReference type="SUPFAM" id="SSF50978">
    <property type="entry name" value="WD40 repeat-like"/>
    <property type="match status" value="1"/>
</dbReference>
<dbReference type="PROSITE" id="PS50896">
    <property type="entry name" value="LISH"/>
    <property type="match status" value="1"/>
</dbReference>
<dbReference type="PROSITE" id="PS00678">
    <property type="entry name" value="WD_REPEATS_1"/>
    <property type="match status" value="4"/>
</dbReference>
<dbReference type="PROSITE" id="PS50082">
    <property type="entry name" value="WD_REPEATS_2"/>
    <property type="match status" value="7"/>
</dbReference>
<dbReference type="PROSITE" id="PS50294">
    <property type="entry name" value="WD_REPEATS_REGION"/>
    <property type="match status" value="1"/>
</dbReference>
<sequence>MSLSERQKEEINRAIAEYMQNNGYSESFSVFLKESSLSENDIKPLGGILEKKWTTVLRLQRKVNDLESKLQESQREINHGAPTRDKRQAADWIPRPPETQKLTGHRLPITRVIFHPLWTIMASCSEDATIKVWDYETGQLERTLKGHTDAVNDIAIDAAGKQLVSCSSDLSIKLWDFGQTYDCLKSLKGHEHTVSSVTFLPTGDFVLSASRDHTIKQWDISTGYCVYTFRGHNDWVRMIRISNDGTLFASASLDQTVTVWSFATKSAKLVLRDHEHAVECVEWAPDTAYTNVTGQQPEGNSTHILFSGSRDRSIKAWNINTGDVLFTLLAHENWVRGLAFHPKGKYLISVADDKTLRVWELSAQRCMKAIEAHEHFVSTVAFHQTSPFVITGSVDMSCKVWECR</sequence>
<feature type="chain" id="PRO_0000051066" description="Lissencephaly-1 homolog">
    <location>
        <begin position="1"/>
        <end position="404"/>
    </location>
</feature>
<feature type="domain" description="LisH" evidence="2">
    <location>
        <begin position="7"/>
        <end position="39"/>
    </location>
</feature>
<feature type="repeat" description="WD 1">
    <location>
        <begin position="104"/>
        <end position="145"/>
    </location>
</feature>
<feature type="repeat" description="WD 2">
    <location>
        <begin position="146"/>
        <end position="185"/>
    </location>
</feature>
<feature type="repeat" description="WD 3">
    <location>
        <begin position="189"/>
        <end position="228"/>
    </location>
</feature>
<feature type="repeat" description="WD 4">
    <location>
        <begin position="231"/>
        <end position="270"/>
    </location>
</feature>
<feature type="repeat" description="WD 5">
    <location>
        <begin position="273"/>
        <end position="327"/>
    </location>
</feature>
<feature type="repeat" description="WD 6">
    <location>
        <begin position="330"/>
        <end position="369"/>
    </location>
</feature>
<feature type="repeat" description="WD 7">
    <location>
        <begin position="372"/>
        <end position="404"/>
    </location>
</feature>
<feature type="region of interest" description="Disordered" evidence="3">
    <location>
        <begin position="69"/>
        <end position="90"/>
    </location>
</feature>
<feature type="coiled-coil region" evidence="2">
    <location>
        <begin position="54"/>
        <end position="81"/>
    </location>
</feature>
<feature type="compositionally biased region" description="Basic and acidic residues" evidence="3">
    <location>
        <begin position="69"/>
        <end position="89"/>
    </location>
</feature>
<organism>
    <name type="scientific">Caenorhabditis elegans</name>
    <dbReference type="NCBI Taxonomy" id="6239"/>
    <lineage>
        <taxon>Eukaryota</taxon>
        <taxon>Metazoa</taxon>
        <taxon>Ecdysozoa</taxon>
        <taxon>Nematoda</taxon>
        <taxon>Chromadorea</taxon>
        <taxon>Rhabditida</taxon>
        <taxon>Rhabditina</taxon>
        <taxon>Rhabditomorpha</taxon>
        <taxon>Rhabditoidea</taxon>
        <taxon>Rhabditidae</taxon>
        <taxon>Peloderinae</taxon>
        <taxon>Caenorhabditis</taxon>
    </lineage>
</organism>
<name>LIS1_CAEEL</name>
<evidence type="ECO:0000250" key="1">
    <source>
        <dbReference type="UniProtKB" id="P63004"/>
    </source>
</evidence>
<evidence type="ECO:0000255" key="2">
    <source>
        <dbReference type="HAMAP-Rule" id="MF_03141"/>
    </source>
</evidence>
<evidence type="ECO:0000256" key="3">
    <source>
        <dbReference type="SAM" id="MobiDB-lite"/>
    </source>
</evidence>
<evidence type="ECO:0000269" key="4">
    <source>
    </source>
</evidence>
<evidence type="ECO:0000269" key="5">
    <source>
    </source>
</evidence>
<evidence type="ECO:0000269" key="6">
    <source>
    </source>
</evidence>
<evidence type="ECO:0000269" key="7">
    <source>
    </source>
</evidence>
<evidence type="ECO:0000269" key="8">
    <source>
    </source>
</evidence>
<evidence type="ECO:0000269" key="9">
    <source>
    </source>
</evidence>
<evidence type="ECO:0000305" key="10"/>
<evidence type="ECO:0000305" key="11">
    <source>
    </source>
</evidence>
<evidence type="ECO:0000312" key="12">
    <source>
        <dbReference type="WormBase" id="T03F6.5"/>
    </source>
</evidence>
<proteinExistence type="evidence at protein level"/>
<protein>
    <recommendedName>
        <fullName evidence="2">Lissencephaly-1 homolog</fullName>
    </recommendedName>
    <alternativeName>
        <fullName>Pronuclear migration abnormal protein 1</fullName>
    </alternativeName>
</protein>
<accession>Q9NDC9</accession>
<accession>O45742</accession>
<keyword id="KW-0131">Cell cycle</keyword>
<keyword id="KW-0132">Cell division</keyword>
<keyword id="KW-0137">Centromere</keyword>
<keyword id="KW-0158">Chromosome</keyword>
<keyword id="KW-0175">Coiled coil</keyword>
<keyword id="KW-0963">Cytoplasm</keyword>
<keyword id="KW-0206">Cytoskeleton</keyword>
<keyword id="KW-0217">Developmental protein</keyword>
<keyword id="KW-0221">Differentiation</keyword>
<keyword id="KW-0995">Kinetochore</keyword>
<keyword id="KW-0493">Microtubule</keyword>
<keyword id="KW-0498">Mitosis</keyword>
<keyword id="KW-0524">Neurogenesis</keyword>
<keyword id="KW-0539">Nucleus</keyword>
<keyword id="KW-0896">Oogenesis</keyword>
<keyword id="KW-1185">Reference proteome</keyword>
<keyword id="KW-0677">Repeat</keyword>
<keyword id="KW-0813">Transport</keyword>
<keyword id="KW-0853">WD repeat</keyword>